<protein>
    <recommendedName>
        <fullName evidence="1">Elongation factor P</fullName>
        <shortName evidence="1">EF-P</shortName>
    </recommendedName>
</protein>
<gene>
    <name evidence="1" type="primary">efp</name>
    <name type="ordered locus">BURPS1710b_2886</name>
</gene>
<organism>
    <name type="scientific">Burkholderia pseudomallei (strain 1710b)</name>
    <dbReference type="NCBI Taxonomy" id="320372"/>
    <lineage>
        <taxon>Bacteria</taxon>
        <taxon>Pseudomonadati</taxon>
        <taxon>Pseudomonadota</taxon>
        <taxon>Betaproteobacteria</taxon>
        <taxon>Burkholderiales</taxon>
        <taxon>Burkholderiaceae</taxon>
        <taxon>Burkholderia</taxon>
        <taxon>pseudomallei group</taxon>
    </lineage>
</organism>
<reference key="1">
    <citation type="journal article" date="2010" name="Genome Biol. Evol.">
        <title>Continuing evolution of Burkholderia mallei through genome reduction and large-scale rearrangements.</title>
        <authorList>
            <person name="Losada L."/>
            <person name="Ronning C.M."/>
            <person name="DeShazer D."/>
            <person name="Woods D."/>
            <person name="Fedorova N."/>
            <person name="Kim H.S."/>
            <person name="Shabalina S.A."/>
            <person name="Pearson T.R."/>
            <person name="Brinkac L."/>
            <person name="Tan P."/>
            <person name="Nandi T."/>
            <person name="Crabtree J."/>
            <person name="Badger J."/>
            <person name="Beckstrom-Sternberg S."/>
            <person name="Saqib M."/>
            <person name="Schutzer S.E."/>
            <person name="Keim P."/>
            <person name="Nierman W.C."/>
        </authorList>
    </citation>
    <scope>NUCLEOTIDE SEQUENCE [LARGE SCALE GENOMIC DNA]</scope>
    <source>
        <strain>1710b</strain>
    </source>
</reference>
<keyword id="KW-0963">Cytoplasm</keyword>
<keyword id="KW-0251">Elongation factor</keyword>
<keyword id="KW-0648">Protein biosynthesis</keyword>
<accession>Q3JQ86</accession>
<sequence length="185" mass="20792">MKTAQELRVGNVVMIGNDAWVVSKTEYNKSGRNAAVVKMKLKNLLNGGGQESVYKADDKFEVVVLDRKEVTYSYFADPMYVFMDADYNQYEVEAEMMGDALNYLEDGMACEVVFYNEKAISVELPTILVREITYTEPAVKGDTSSGKVLKNAKLATGFELQVPLFCNTGDKIEIDTRTNEYRSRA</sequence>
<evidence type="ECO:0000255" key="1">
    <source>
        <dbReference type="HAMAP-Rule" id="MF_00141"/>
    </source>
</evidence>
<feature type="chain" id="PRO_1000010701" description="Elongation factor P">
    <location>
        <begin position="1"/>
        <end position="185"/>
    </location>
</feature>
<proteinExistence type="inferred from homology"/>
<name>EFP_BURP1</name>
<comment type="function">
    <text evidence="1">Involved in peptide bond synthesis. Stimulates efficient translation and peptide-bond synthesis on native or reconstituted 70S ribosomes in vitro. Probably functions indirectly by altering the affinity of the ribosome for aminoacyl-tRNA, thus increasing their reactivity as acceptors for peptidyl transferase.</text>
</comment>
<comment type="pathway">
    <text evidence="1">Protein biosynthesis; polypeptide chain elongation.</text>
</comment>
<comment type="subcellular location">
    <subcellularLocation>
        <location evidence="1">Cytoplasm</location>
    </subcellularLocation>
</comment>
<comment type="similarity">
    <text evidence="1">Belongs to the elongation factor P family.</text>
</comment>
<dbReference type="EMBL" id="CP000124">
    <property type="protein sequence ID" value="ABA47791.1"/>
    <property type="molecule type" value="Genomic_DNA"/>
</dbReference>
<dbReference type="RefSeq" id="WP_004193484.1">
    <property type="nucleotide sequence ID" value="NC_007434.1"/>
</dbReference>
<dbReference type="SMR" id="Q3JQ86"/>
<dbReference type="EnsemblBacteria" id="ABA47791">
    <property type="protein sequence ID" value="ABA47791"/>
    <property type="gene ID" value="BURPS1710b_2886"/>
</dbReference>
<dbReference type="GeneID" id="93061002"/>
<dbReference type="KEGG" id="bpm:BURPS1710b_2886"/>
<dbReference type="HOGENOM" id="CLU_074944_2_1_4"/>
<dbReference type="UniPathway" id="UPA00345"/>
<dbReference type="Proteomes" id="UP000002700">
    <property type="component" value="Chromosome I"/>
</dbReference>
<dbReference type="GO" id="GO:0005737">
    <property type="term" value="C:cytoplasm"/>
    <property type="evidence" value="ECO:0007669"/>
    <property type="project" value="UniProtKB-SubCell"/>
</dbReference>
<dbReference type="GO" id="GO:0003746">
    <property type="term" value="F:translation elongation factor activity"/>
    <property type="evidence" value="ECO:0007669"/>
    <property type="project" value="UniProtKB-UniRule"/>
</dbReference>
<dbReference type="GO" id="GO:0043043">
    <property type="term" value="P:peptide biosynthetic process"/>
    <property type="evidence" value="ECO:0007669"/>
    <property type="project" value="InterPro"/>
</dbReference>
<dbReference type="CDD" id="cd04470">
    <property type="entry name" value="S1_EF-P_repeat_1"/>
    <property type="match status" value="1"/>
</dbReference>
<dbReference type="CDD" id="cd05794">
    <property type="entry name" value="S1_EF-P_repeat_2"/>
    <property type="match status" value="1"/>
</dbReference>
<dbReference type="FunFam" id="2.30.30.30:FF:000003">
    <property type="entry name" value="Elongation factor P"/>
    <property type="match status" value="1"/>
</dbReference>
<dbReference type="FunFam" id="2.40.50.140:FF:000004">
    <property type="entry name" value="Elongation factor P"/>
    <property type="match status" value="1"/>
</dbReference>
<dbReference type="FunFam" id="2.40.50.140:FF:000009">
    <property type="entry name" value="Elongation factor P"/>
    <property type="match status" value="1"/>
</dbReference>
<dbReference type="Gene3D" id="2.30.30.30">
    <property type="match status" value="1"/>
</dbReference>
<dbReference type="Gene3D" id="2.40.50.140">
    <property type="entry name" value="Nucleic acid-binding proteins"/>
    <property type="match status" value="2"/>
</dbReference>
<dbReference type="HAMAP" id="MF_00141">
    <property type="entry name" value="EF_P"/>
    <property type="match status" value="1"/>
</dbReference>
<dbReference type="InterPro" id="IPR015365">
    <property type="entry name" value="Elong-fact-P_C"/>
</dbReference>
<dbReference type="InterPro" id="IPR012340">
    <property type="entry name" value="NA-bd_OB-fold"/>
</dbReference>
<dbReference type="InterPro" id="IPR014722">
    <property type="entry name" value="Rib_uL2_dom2"/>
</dbReference>
<dbReference type="InterPro" id="IPR020599">
    <property type="entry name" value="Transl_elong_fac_P/YeiP"/>
</dbReference>
<dbReference type="InterPro" id="IPR013185">
    <property type="entry name" value="Transl_elong_KOW-like"/>
</dbReference>
<dbReference type="InterPro" id="IPR001059">
    <property type="entry name" value="Transl_elong_P/YeiP_cen"/>
</dbReference>
<dbReference type="InterPro" id="IPR013852">
    <property type="entry name" value="Transl_elong_P/YeiP_CS"/>
</dbReference>
<dbReference type="InterPro" id="IPR011768">
    <property type="entry name" value="Transl_elongation_fac_P"/>
</dbReference>
<dbReference type="InterPro" id="IPR008991">
    <property type="entry name" value="Translation_prot_SH3-like_sf"/>
</dbReference>
<dbReference type="NCBIfam" id="TIGR00038">
    <property type="entry name" value="efp"/>
    <property type="match status" value="1"/>
</dbReference>
<dbReference type="NCBIfam" id="NF001810">
    <property type="entry name" value="PRK00529.1"/>
    <property type="match status" value="1"/>
</dbReference>
<dbReference type="PANTHER" id="PTHR30053">
    <property type="entry name" value="ELONGATION FACTOR P"/>
    <property type="match status" value="1"/>
</dbReference>
<dbReference type="PANTHER" id="PTHR30053:SF12">
    <property type="entry name" value="ELONGATION FACTOR P (EF-P) FAMILY PROTEIN"/>
    <property type="match status" value="1"/>
</dbReference>
<dbReference type="Pfam" id="PF01132">
    <property type="entry name" value="EFP"/>
    <property type="match status" value="1"/>
</dbReference>
<dbReference type="Pfam" id="PF08207">
    <property type="entry name" value="EFP_N"/>
    <property type="match status" value="1"/>
</dbReference>
<dbReference type="Pfam" id="PF09285">
    <property type="entry name" value="Elong-fact-P_C"/>
    <property type="match status" value="1"/>
</dbReference>
<dbReference type="PIRSF" id="PIRSF005901">
    <property type="entry name" value="EF-P"/>
    <property type="match status" value="1"/>
</dbReference>
<dbReference type="SMART" id="SM01185">
    <property type="entry name" value="EFP"/>
    <property type="match status" value="1"/>
</dbReference>
<dbReference type="SMART" id="SM00841">
    <property type="entry name" value="Elong-fact-P_C"/>
    <property type="match status" value="1"/>
</dbReference>
<dbReference type="SUPFAM" id="SSF50249">
    <property type="entry name" value="Nucleic acid-binding proteins"/>
    <property type="match status" value="2"/>
</dbReference>
<dbReference type="SUPFAM" id="SSF50104">
    <property type="entry name" value="Translation proteins SH3-like domain"/>
    <property type="match status" value="1"/>
</dbReference>
<dbReference type="PROSITE" id="PS01275">
    <property type="entry name" value="EFP"/>
    <property type="match status" value="1"/>
</dbReference>